<proteinExistence type="evidence at protein level"/>
<reference key="1">
    <citation type="submission" date="2020-08" db="EMBL/GenBank/DDBJ databases">
        <title>Characterization of Erwinia tracheiphila lytic bacteriophage FBB1 isolated from the disease transmitter spotted cucumber beetle.</title>
        <authorList>
            <person name="Fu B."/>
            <person name="Beattie G.A."/>
        </authorList>
    </citation>
    <scope>NUCLEOTIDE SEQUENCE [GENOMIC DNA]</scope>
</reference>
<reference key="2">
    <citation type="journal article" date="2022" name="Nature">
        <title>Phage anti-CBASS and anti-Pycsar nucleases subvert bacterial immunity.</title>
        <authorList>
            <person name="Hobbs S.J."/>
            <person name="Wein T."/>
            <person name="Lu A."/>
            <person name="Morehouse B.R."/>
            <person name="Schnabel J."/>
            <person name="Leavitt A."/>
            <person name="Yirmiya E."/>
            <person name="Sorek R."/>
            <person name="Kranzusch P.J."/>
        </authorList>
    </citation>
    <scope>X-RAY CRYSTALLOGRAPHY (1.20 ANGSTROMS) OF 10-152 IN COMPLEX WITH 3'3'-CGAMP</scope>
    <scope>FUNCTION</scope>
    <scope>ACTIVE SITE</scope>
    <scope>CATALYTIC ACTIVITY</scope>
</reference>
<dbReference type="EMBL" id="MT920315">
    <property type="protein sequence ID" value="QOI66641.1"/>
    <property type="molecule type" value="Genomic_DNA"/>
</dbReference>
<dbReference type="PDB" id="7T26">
    <property type="method" value="X-ray"/>
    <property type="resolution" value="1.14 A"/>
    <property type="chains" value="A=10-152"/>
</dbReference>
<dbReference type="PDB" id="7T27">
    <property type="method" value="X-ray"/>
    <property type="resolution" value="1.20 A"/>
    <property type="chains" value="A=10-152"/>
</dbReference>
<dbReference type="PDBsum" id="7T26"/>
<dbReference type="PDBsum" id="7T27"/>
<dbReference type="SMR" id="A0A868BQY3"/>
<dbReference type="Proteomes" id="UP000663068">
    <property type="component" value="Segment"/>
</dbReference>
<dbReference type="GO" id="GO:0016787">
    <property type="term" value="F:hydrolase activity"/>
    <property type="evidence" value="ECO:0007669"/>
    <property type="project" value="UniProtKB-KW"/>
</dbReference>
<dbReference type="GO" id="GO:0052170">
    <property type="term" value="P:symbiont-mediated suppression of host innate immune response"/>
    <property type="evidence" value="ECO:0007669"/>
    <property type="project" value="UniProtKB-KW"/>
</dbReference>
<dbReference type="InterPro" id="IPR056175">
    <property type="entry name" value="Acb1-like_C"/>
</dbReference>
<dbReference type="InterPro" id="IPR009097">
    <property type="entry name" value="Cyclic_Pdiesterase"/>
</dbReference>
<dbReference type="Pfam" id="PF23474">
    <property type="entry name" value="Acb1"/>
    <property type="match status" value="1"/>
</dbReference>
<dbReference type="SUPFAM" id="SSF55144">
    <property type="entry name" value="LigT-like"/>
    <property type="match status" value="1"/>
</dbReference>
<comment type="function">
    <text evidence="1 2">Counteracts the host CBASS antiviral defense system. Phosphodiesterase that enables metal-independent hydrolysis of the host cyclic di- and trinucleotide CBASS signals such as 3'3'-cGAMP, 3'3'cUA, and 3'3'3'-cAAA (PubMed:35395152). Does not cleave cGG or cA4 (By similarity). Besides evasion of the CBASS system, might also enable evasion of the type III CRISPR systems that use cA3 signals (By similarity).</text>
</comment>
<comment type="catalytic activity">
    <reaction evidence="2">
        <text>3',3'-cUAMP + H2O = U[3'-5']pAp[3'] + H(+)</text>
        <dbReference type="Rhea" id="RHEA:72835"/>
        <dbReference type="ChEBI" id="CHEBI:15377"/>
        <dbReference type="ChEBI" id="CHEBI:15378"/>
        <dbReference type="ChEBI" id="CHEBI:143809"/>
        <dbReference type="ChEBI" id="CHEBI:192498"/>
    </reaction>
    <physiologicalReaction direction="left-to-right" evidence="2">
        <dbReference type="Rhea" id="RHEA:72836"/>
    </physiologicalReaction>
</comment>
<comment type="catalytic activity">
    <reaction evidence="2">
        <text>3',3',3'-c-tri-AMP + H2O = A[3'-5']pA[3'-5']pAp[3'] + H(+)</text>
        <dbReference type="Rhea" id="RHEA:72859"/>
        <dbReference type="ChEBI" id="CHEBI:15377"/>
        <dbReference type="ChEBI" id="CHEBI:15378"/>
        <dbReference type="ChEBI" id="CHEBI:192523"/>
        <dbReference type="ChEBI" id="CHEBI:192530"/>
    </reaction>
    <physiologicalReaction direction="left-to-right" evidence="2">
        <dbReference type="Rhea" id="RHEA:72860"/>
    </physiologicalReaction>
</comment>
<comment type="catalytic activity">
    <reaction evidence="2">
        <text>3',3',3'-cAAG + H2O = G[3'-5']pA[3'-5']pAp[3'] + H(+)</text>
        <dbReference type="Rhea" id="RHEA:72863"/>
        <dbReference type="ChEBI" id="CHEBI:15377"/>
        <dbReference type="ChEBI" id="CHEBI:15378"/>
        <dbReference type="ChEBI" id="CHEBI:143810"/>
        <dbReference type="ChEBI" id="CHEBI:192532"/>
    </reaction>
    <physiologicalReaction direction="left-to-right" evidence="2">
        <dbReference type="Rhea" id="RHEA:72864"/>
    </physiologicalReaction>
</comment>
<comment type="catalytic activity">
    <reaction evidence="2">
        <text>3',3',3'-cAAG + H2O = A[3'-5']pG[3'-5']pAp[3'] + H(+)</text>
        <dbReference type="Rhea" id="RHEA:72867"/>
        <dbReference type="ChEBI" id="CHEBI:15377"/>
        <dbReference type="ChEBI" id="CHEBI:15378"/>
        <dbReference type="ChEBI" id="CHEBI:143810"/>
        <dbReference type="ChEBI" id="CHEBI:192533"/>
    </reaction>
    <physiologicalReaction direction="left-to-right" evidence="2">
        <dbReference type="Rhea" id="RHEA:72868"/>
    </physiologicalReaction>
</comment>
<comment type="catalytic activity">
    <reaction evidence="2">
        <text>3',3'-cGAMP + H2O = G[3'-5']pAp[3'] + H(+)</text>
        <dbReference type="Rhea" id="RHEA:72831"/>
        <dbReference type="ChEBI" id="CHEBI:15377"/>
        <dbReference type="ChEBI" id="CHEBI:15378"/>
        <dbReference type="ChEBI" id="CHEBI:71501"/>
        <dbReference type="ChEBI" id="CHEBI:192497"/>
    </reaction>
    <physiologicalReaction direction="left-to-right" evidence="2">
        <dbReference type="Rhea" id="RHEA:72832"/>
    </physiologicalReaction>
</comment>
<comment type="similarity">
    <text evidence="4">Belongs to the anti-CBASS protein Acb1 family.</text>
</comment>
<organismHost>
    <name type="scientific">Erwinia tracheiphila</name>
    <dbReference type="NCBI Taxonomy" id="65700"/>
</organismHost>
<organism>
    <name type="scientific">Erwinia phage FBB1</name>
    <dbReference type="NCBI Taxonomy" id="2776772"/>
    <lineage>
        <taxon>Viruses</taxon>
        <taxon>Duplodnaviria</taxon>
        <taxon>Heunggongvirae</taxon>
        <taxon>Uroviricota</taxon>
        <taxon>Caudoviricetes</taxon>
        <taxon>Straboviridae</taxon>
        <taxon>Tevenvirinae</taxon>
        <taxon>Roskildevirus</taxon>
    </lineage>
</organism>
<sequence>MKKLSEFGKGLYVAAKFSESTLDALEELQRSLKLPNPVPRDKLHTTIVYSRVNVPYKVASGSFEIADKGKLTVFETQSGNRALVLEMDSDYLSARHSYAKALGASYDYPDYRPHITLSYNIGVLNFSGEYKVPVVLDREYSEELDLEWSDKD</sequence>
<feature type="chain" id="PRO_0000456658" description="Anti-CBASS protein Acb1">
    <location>
        <begin position="1"/>
        <end position="152"/>
    </location>
</feature>
<feature type="active site" evidence="2">
    <location>
        <position position="44"/>
    </location>
</feature>
<feature type="active site" evidence="2">
    <location>
        <position position="46"/>
    </location>
</feature>
<feature type="active site" evidence="2">
    <location>
        <position position="114"/>
    </location>
</feature>
<feature type="active site" evidence="2">
    <location>
        <position position="116"/>
    </location>
</feature>
<feature type="binding site" evidence="2">
    <location>
        <position position="12"/>
    </location>
    <ligand>
        <name>3',3'-cGAMP</name>
        <dbReference type="ChEBI" id="CHEBI:71501"/>
    </ligand>
</feature>
<feature type="binding site" evidence="2">
    <location>
        <position position="12"/>
    </location>
    <ligand>
        <name>3',3'-cUAMP</name>
        <dbReference type="ChEBI" id="CHEBI:143809"/>
    </ligand>
</feature>
<feature type="binding site" evidence="2">
    <location>
        <position position="74"/>
    </location>
    <ligand>
        <name>3',3'-cGAMP</name>
        <dbReference type="ChEBI" id="CHEBI:71501"/>
    </ligand>
</feature>
<feature type="binding site" evidence="2">
    <location>
        <position position="74"/>
    </location>
    <ligand>
        <name>3',3'-cUAMP</name>
        <dbReference type="ChEBI" id="CHEBI:143809"/>
    </ligand>
</feature>
<feature type="binding site" evidence="2">
    <location>
        <position position="108"/>
    </location>
    <ligand>
        <name>3',3'-cGAMP</name>
        <dbReference type="ChEBI" id="CHEBI:71501"/>
    </ligand>
</feature>
<feature type="binding site" evidence="2">
    <location>
        <position position="108"/>
    </location>
    <ligand>
        <name>3',3'-cUAMP</name>
        <dbReference type="ChEBI" id="CHEBI:143809"/>
    </ligand>
</feature>
<feature type="binding site" description="specific to adenosine" evidence="2">
    <location>
        <position position="142"/>
    </location>
    <ligand>
        <name>3',3'-cGAMP</name>
        <dbReference type="ChEBI" id="CHEBI:71501"/>
    </ligand>
</feature>
<feature type="binding site" description="specific to adenosine" evidence="2">
    <location>
        <position position="142"/>
    </location>
    <ligand>
        <name>3',3'-cUAMP</name>
        <dbReference type="ChEBI" id="CHEBI:143809"/>
    </ligand>
</feature>
<feature type="binding site" evidence="2">
    <location>
        <position position="148"/>
    </location>
    <ligand>
        <name>3',3'-cGAMP</name>
        <dbReference type="ChEBI" id="CHEBI:71501"/>
    </ligand>
</feature>
<feature type="binding site" evidence="2">
    <location>
        <position position="148"/>
    </location>
    <ligand>
        <name>3',3'-cUAMP</name>
        <dbReference type="ChEBI" id="CHEBI:143809"/>
    </ligand>
</feature>
<feature type="strand" evidence="5">
    <location>
        <begin position="10"/>
        <end position="17"/>
    </location>
</feature>
<feature type="helix" evidence="5">
    <location>
        <begin position="19"/>
        <end position="31"/>
    </location>
</feature>
<feature type="strand" evidence="5">
    <location>
        <begin position="35"/>
        <end position="37"/>
    </location>
</feature>
<feature type="helix" evidence="5">
    <location>
        <begin position="40"/>
        <end position="42"/>
    </location>
</feature>
<feature type="strand" evidence="5">
    <location>
        <begin position="45"/>
        <end position="52"/>
    </location>
</feature>
<feature type="strand" evidence="5">
    <location>
        <begin position="63"/>
        <end position="75"/>
    </location>
</feature>
<feature type="strand" evidence="5">
    <location>
        <begin position="81"/>
        <end position="86"/>
    </location>
</feature>
<feature type="helix" evidence="5">
    <location>
        <begin position="90"/>
        <end position="102"/>
    </location>
</feature>
<feature type="strand" evidence="6">
    <location>
        <begin position="107"/>
        <end position="110"/>
    </location>
</feature>
<feature type="strand" evidence="5">
    <location>
        <begin position="114"/>
        <end position="119"/>
    </location>
</feature>
<feature type="strand" evidence="5">
    <location>
        <begin position="129"/>
        <end position="144"/>
    </location>
</feature>
<protein>
    <recommendedName>
        <fullName evidence="3">Anti-CBASS protein Acb1</fullName>
        <shortName evidence="3">Acb1</shortName>
    </recommendedName>
</protein>
<keyword id="KW-0002">3D-structure</keyword>
<keyword id="KW-0945">Host-virus interaction</keyword>
<keyword id="KW-0378">Hydrolase</keyword>
<keyword id="KW-1090">Inhibition of host innate immune response by virus</keyword>
<keyword id="KW-1185">Reference proteome</keyword>
<keyword id="KW-0899">Viral immunoevasion</keyword>
<accession>A0A868BQY3</accession>
<evidence type="ECO:0000250" key="1">
    <source>
        <dbReference type="UniProtKB" id="P04533"/>
    </source>
</evidence>
<evidence type="ECO:0000269" key="2">
    <source>
    </source>
</evidence>
<evidence type="ECO:0000303" key="3">
    <source>
    </source>
</evidence>
<evidence type="ECO:0000305" key="4"/>
<evidence type="ECO:0007829" key="5">
    <source>
        <dbReference type="PDB" id="7T26"/>
    </source>
</evidence>
<evidence type="ECO:0007829" key="6">
    <source>
        <dbReference type="PDB" id="7T27"/>
    </source>
</evidence>
<name>ACB1_BPFBB</name>